<proteinExistence type="inferred from homology"/>
<sequence length="422" mass="44031">MWEGLWIATAVIAALVVIAALTLGLVLYRRRRISLSPRPERGVVDRSGGYTASSGITFSQTPTTQPAERIDTSGLPAVGDDATVPRDAPKRTIADVHLPEFEPEPQAPEVPEADAIAPPEGRLERLRGRLARSQNALGRGLLGLIGGGDLDEDSWQDVEDTLLVADLGPAATASVVSQLRSRLASGNVRTEADARAVLRDVLINELQPGMDRSIRALPHAGHPSVLLVVGVNGTGKTTTVGKLARVLVADGRRVVLGAADTFRAAAADQLQTWAARVGAAVVRGPEGADPASVAFDAVDKGIAAGADVVLIDTAGRLHTKVGLMDELDKVKRVVTRRASVDEVLLVLDATIGQNGLAQARVFAEVVDISGAVLTKLDGTAKGGIVFRVQQELGVPVKLVGLGEGPDDLAPFEPAAFVDALLG</sequence>
<gene>
    <name evidence="1" type="primary">ftsY</name>
    <name type="ordered locus">BQ2027_MB2945C</name>
</gene>
<comment type="function">
    <text evidence="1">Involved in targeting and insertion of nascent membrane proteins into the cytoplasmic membrane. Acts as a receptor for the complex formed by the signal recognition particle (SRP) and the ribosome-nascent chain (RNC).</text>
</comment>
<comment type="catalytic activity">
    <reaction evidence="1">
        <text>GTP + H2O = GDP + phosphate + H(+)</text>
        <dbReference type="Rhea" id="RHEA:19669"/>
        <dbReference type="ChEBI" id="CHEBI:15377"/>
        <dbReference type="ChEBI" id="CHEBI:15378"/>
        <dbReference type="ChEBI" id="CHEBI:37565"/>
        <dbReference type="ChEBI" id="CHEBI:43474"/>
        <dbReference type="ChEBI" id="CHEBI:58189"/>
        <dbReference type="EC" id="3.6.5.4"/>
    </reaction>
</comment>
<comment type="subunit">
    <text evidence="1">Part of the signal recognition particle protein translocation system, which is composed of SRP and FtsY.</text>
</comment>
<comment type="subcellular location">
    <subcellularLocation>
        <location>Cell membrane</location>
        <topology>Peripheral membrane protein</topology>
        <orientation>Cytoplasmic side</orientation>
    </subcellularLocation>
    <subcellularLocation>
        <location evidence="1">Cytoplasm</location>
    </subcellularLocation>
</comment>
<comment type="similarity">
    <text evidence="1">Belongs to the GTP-binding SRP family. FtsY subfamily.</text>
</comment>
<organism>
    <name type="scientific">Mycobacterium bovis (strain ATCC BAA-935 / AF2122/97)</name>
    <dbReference type="NCBI Taxonomy" id="233413"/>
    <lineage>
        <taxon>Bacteria</taxon>
        <taxon>Bacillati</taxon>
        <taxon>Actinomycetota</taxon>
        <taxon>Actinomycetes</taxon>
        <taxon>Mycobacteriales</taxon>
        <taxon>Mycobacteriaceae</taxon>
        <taxon>Mycobacterium</taxon>
        <taxon>Mycobacterium tuberculosis complex</taxon>
    </lineage>
</organism>
<evidence type="ECO:0000255" key="1">
    <source>
        <dbReference type="HAMAP-Rule" id="MF_00920"/>
    </source>
</evidence>
<evidence type="ECO:0000256" key="2">
    <source>
        <dbReference type="SAM" id="MobiDB-lite"/>
    </source>
</evidence>
<reference key="1">
    <citation type="journal article" date="2003" name="Proc. Natl. Acad. Sci. U.S.A.">
        <title>The complete genome sequence of Mycobacterium bovis.</title>
        <authorList>
            <person name="Garnier T."/>
            <person name="Eiglmeier K."/>
            <person name="Camus J.-C."/>
            <person name="Medina N."/>
            <person name="Mansoor H."/>
            <person name="Pryor M."/>
            <person name="Duthoy S."/>
            <person name="Grondin S."/>
            <person name="Lacroix C."/>
            <person name="Monsempe C."/>
            <person name="Simon S."/>
            <person name="Harris B."/>
            <person name="Atkin R."/>
            <person name="Doggett J."/>
            <person name="Mayes R."/>
            <person name="Keating L."/>
            <person name="Wheeler P.R."/>
            <person name="Parkhill J."/>
            <person name="Barrell B.G."/>
            <person name="Cole S.T."/>
            <person name="Gordon S.V."/>
            <person name="Hewinson R.G."/>
        </authorList>
    </citation>
    <scope>NUCLEOTIDE SEQUENCE [LARGE SCALE GENOMIC DNA]</scope>
    <source>
        <strain>ATCC BAA-935 / AF2122/97</strain>
    </source>
</reference>
<reference key="2">
    <citation type="journal article" date="2017" name="Genome Announc.">
        <title>Updated reference genome sequence and annotation of Mycobacterium bovis AF2122/97.</title>
        <authorList>
            <person name="Malone K.M."/>
            <person name="Farrell D."/>
            <person name="Stuber T.P."/>
            <person name="Schubert O.T."/>
            <person name="Aebersold R."/>
            <person name="Robbe-Austerman S."/>
            <person name="Gordon S.V."/>
        </authorList>
    </citation>
    <scope>NUCLEOTIDE SEQUENCE [LARGE SCALE GENOMIC DNA]</scope>
    <scope>GENOME REANNOTATION</scope>
    <source>
        <strain>ATCC BAA-935 / AF2122/97</strain>
    </source>
</reference>
<accession>P66843</accession>
<accession>A0A1R3Y3D7</accession>
<accession>Q10969</accession>
<accession>X2BLW3</accession>
<feature type="chain" id="PRO_0000101140" description="Signal recognition particle receptor FtsY">
    <location>
        <begin position="1"/>
        <end position="422"/>
    </location>
</feature>
<feature type="region of interest" description="Disordered" evidence="2">
    <location>
        <begin position="39"/>
        <end position="86"/>
    </location>
</feature>
<feature type="compositionally biased region" description="Polar residues" evidence="2">
    <location>
        <begin position="50"/>
        <end position="66"/>
    </location>
</feature>
<feature type="binding site" evidence="1">
    <location>
        <begin position="230"/>
        <end position="237"/>
    </location>
    <ligand>
        <name>GTP</name>
        <dbReference type="ChEBI" id="CHEBI:37565"/>
    </ligand>
</feature>
<feature type="binding site" evidence="1">
    <location>
        <begin position="312"/>
        <end position="316"/>
    </location>
    <ligand>
        <name>GTP</name>
        <dbReference type="ChEBI" id="CHEBI:37565"/>
    </ligand>
</feature>
<feature type="binding site" evidence="1">
    <location>
        <begin position="374"/>
        <end position="377"/>
    </location>
    <ligand>
        <name>GTP</name>
        <dbReference type="ChEBI" id="CHEBI:37565"/>
    </ligand>
</feature>
<name>FTSY_MYCBO</name>
<keyword id="KW-1003">Cell membrane</keyword>
<keyword id="KW-0963">Cytoplasm</keyword>
<keyword id="KW-0342">GTP-binding</keyword>
<keyword id="KW-0378">Hydrolase</keyword>
<keyword id="KW-0472">Membrane</keyword>
<keyword id="KW-0547">Nucleotide-binding</keyword>
<keyword id="KW-0675">Receptor</keyword>
<keyword id="KW-1185">Reference proteome</keyword>
<dbReference type="EC" id="3.6.5.4" evidence="1"/>
<dbReference type="EMBL" id="LT708304">
    <property type="protein sequence ID" value="SIU01566.1"/>
    <property type="molecule type" value="Genomic_DNA"/>
</dbReference>
<dbReference type="RefSeq" id="NP_856590.1">
    <property type="nucleotide sequence ID" value="NC_002945.3"/>
</dbReference>
<dbReference type="RefSeq" id="WP_003899541.1">
    <property type="nucleotide sequence ID" value="NC_002945.4"/>
</dbReference>
<dbReference type="SMR" id="P66843"/>
<dbReference type="KEGG" id="mbo:BQ2027_MB2945C"/>
<dbReference type="PATRIC" id="fig|233413.5.peg.3232"/>
<dbReference type="Proteomes" id="UP000001419">
    <property type="component" value="Chromosome"/>
</dbReference>
<dbReference type="GO" id="GO:0005737">
    <property type="term" value="C:cytoplasm"/>
    <property type="evidence" value="ECO:0007669"/>
    <property type="project" value="UniProtKB-SubCell"/>
</dbReference>
<dbReference type="GO" id="GO:0005886">
    <property type="term" value="C:plasma membrane"/>
    <property type="evidence" value="ECO:0007669"/>
    <property type="project" value="UniProtKB-SubCell"/>
</dbReference>
<dbReference type="GO" id="GO:0016887">
    <property type="term" value="F:ATP hydrolysis activity"/>
    <property type="evidence" value="ECO:0007669"/>
    <property type="project" value="InterPro"/>
</dbReference>
<dbReference type="GO" id="GO:0005525">
    <property type="term" value="F:GTP binding"/>
    <property type="evidence" value="ECO:0007669"/>
    <property type="project" value="UniProtKB-UniRule"/>
</dbReference>
<dbReference type="GO" id="GO:0003924">
    <property type="term" value="F:GTPase activity"/>
    <property type="evidence" value="ECO:0007669"/>
    <property type="project" value="UniProtKB-UniRule"/>
</dbReference>
<dbReference type="GO" id="GO:0005047">
    <property type="term" value="F:signal recognition particle binding"/>
    <property type="evidence" value="ECO:0007669"/>
    <property type="project" value="TreeGrafter"/>
</dbReference>
<dbReference type="GO" id="GO:0006614">
    <property type="term" value="P:SRP-dependent cotranslational protein targeting to membrane"/>
    <property type="evidence" value="ECO:0007669"/>
    <property type="project" value="InterPro"/>
</dbReference>
<dbReference type="CDD" id="cd17874">
    <property type="entry name" value="FtsY"/>
    <property type="match status" value="1"/>
</dbReference>
<dbReference type="FunFam" id="1.20.120.140:FF:000002">
    <property type="entry name" value="Signal recognition particle receptor FtsY"/>
    <property type="match status" value="1"/>
</dbReference>
<dbReference type="FunFam" id="3.40.50.300:FF:000053">
    <property type="entry name" value="Signal recognition particle receptor FtsY"/>
    <property type="match status" value="1"/>
</dbReference>
<dbReference type="Gene3D" id="3.40.50.300">
    <property type="entry name" value="P-loop containing nucleotide triphosphate hydrolases"/>
    <property type="match status" value="1"/>
</dbReference>
<dbReference type="Gene3D" id="1.20.120.140">
    <property type="entry name" value="Signal recognition particle SRP54, nucleotide-binding domain"/>
    <property type="match status" value="1"/>
</dbReference>
<dbReference type="HAMAP" id="MF_00920">
    <property type="entry name" value="FtsY"/>
    <property type="match status" value="1"/>
</dbReference>
<dbReference type="InterPro" id="IPR003593">
    <property type="entry name" value="AAA+_ATPase"/>
</dbReference>
<dbReference type="InterPro" id="IPR027417">
    <property type="entry name" value="P-loop_NTPase"/>
</dbReference>
<dbReference type="InterPro" id="IPR013822">
    <property type="entry name" value="Signal_recog_particl_SRP54_hlx"/>
</dbReference>
<dbReference type="InterPro" id="IPR004390">
    <property type="entry name" value="SR_rcpt_FtsY"/>
</dbReference>
<dbReference type="InterPro" id="IPR036225">
    <property type="entry name" value="SRP/SRP_N"/>
</dbReference>
<dbReference type="InterPro" id="IPR000897">
    <property type="entry name" value="SRP54_GTPase_dom"/>
</dbReference>
<dbReference type="InterPro" id="IPR042101">
    <property type="entry name" value="SRP54_N_sf"/>
</dbReference>
<dbReference type="NCBIfam" id="TIGR00064">
    <property type="entry name" value="ftsY"/>
    <property type="match status" value="1"/>
</dbReference>
<dbReference type="PANTHER" id="PTHR43134">
    <property type="entry name" value="SIGNAL RECOGNITION PARTICLE RECEPTOR SUBUNIT ALPHA"/>
    <property type="match status" value="1"/>
</dbReference>
<dbReference type="PANTHER" id="PTHR43134:SF1">
    <property type="entry name" value="SIGNAL RECOGNITION PARTICLE RECEPTOR SUBUNIT ALPHA"/>
    <property type="match status" value="1"/>
</dbReference>
<dbReference type="Pfam" id="PF00448">
    <property type="entry name" value="SRP54"/>
    <property type="match status" value="1"/>
</dbReference>
<dbReference type="Pfam" id="PF02881">
    <property type="entry name" value="SRP54_N"/>
    <property type="match status" value="1"/>
</dbReference>
<dbReference type="SMART" id="SM00382">
    <property type="entry name" value="AAA"/>
    <property type="match status" value="1"/>
</dbReference>
<dbReference type="SMART" id="SM00962">
    <property type="entry name" value="SRP54"/>
    <property type="match status" value="1"/>
</dbReference>
<dbReference type="SMART" id="SM00963">
    <property type="entry name" value="SRP54_N"/>
    <property type="match status" value="1"/>
</dbReference>
<dbReference type="SUPFAM" id="SSF47364">
    <property type="entry name" value="Domain of the SRP/SRP receptor G-proteins"/>
    <property type="match status" value="1"/>
</dbReference>
<dbReference type="SUPFAM" id="SSF52540">
    <property type="entry name" value="P-loop containing nucleoside triphosphate hydrolases"/>
    <property type="match status" value="1"/>
</dbReference>
<dbReference type="PROSITE" id="PS00300">
    <property type="entry name" value="SRP54"/>
    <property type="match status" value="1"/>
</dbReference>
<protein>
    <recommendedName>
        <fullName evidence="1">Signal recognition particle receptor FtsY</fullName>
        <shortName evidence="1">SRP receptor</shortName>
        <ecNumber evidence="1">3.6.5.4</ecNumber>
    </recommendedName>
</protein>